<gene>
    <name type="primary">CCD8A</name>
    <name type="synonym">D10L</name>
    <name type="ordered locus">Os01g0566500</name>
    <name type="ordered locus">LOC_Os01g38580</name>
    <name type="ORF">OsJ_02260</name>
    <name type="ORF">P0002B05.5</name>
    <name type="ORF">P0697C12.32</name>
</gene>
<keyword id="KW-0150">Chloroplast</keyword>
<keyword id="KW-0223">Dioxygenase</keyword>
<keyword id="KW-0408">Iron</keyword>
<keyword id="KW-0479">Metal-binding</keyword>
<keyword id="KW-0560">Oxidoreductase</keyword>
<keyword id="KW-0934">Plastid</keyword>
<keyword id="KW-1185">Reference proteome</keyword>
<keyword id="KW-0809">Transit peptide</keyword>
<dbReference type="EC" id="1.13.11.-"/>
<dbReference type="EMBL" id="AP003141">
    <property type="protein sequence ID" value="BAB63485.1"/>
    <property type="molecule type" value="Genomic_DNA"/>
</dbReference>
<dbReference type="EMBL" id="AP003296">
    <property type="protein sequence ID" value="BAB64685.1"/>
    <property type="molecule type" value="Genomic_DNA"/>
</dbReference>
<dbReference type="EMBL" id="AP008207">
    <property type="protein sequence ID" value="BAF05277.1"/>
    <property type="molecule type" value="Genomic_DNA"/>
</dbReference>
<dbReference type="EMBL" id="AP014957">
    <property type="protein sequence ID" value="BAS72756.1"/>
    <property type="molecule type" value="Genomic_DNA"/>
</dbReference>
<dbReference type="EMBL" id="CM000138">
    <property type="protein sequence ID" value="EAZ12371.1"/>
    <property type="molecule type" value="Genomic_DNA"/>
</dbReference>
<dbReference type="EMBL" id="AK058473">
    <property type="protein sequence ID" value="BAG86705.1"/>
    <property type="molecule type" value="mRNA"/>
</dbReference>
<dbReference type="RefSeq" id="XP_015627460.1">
    <property type="nucleotide sequence ID" value="XM_015771974.1"/>
</dbReference>
<dbReference type="RefSeq" id="XP_015627470.1">
    <property type="nucleotide sequence ID" value="XM_015771984.1"/>
</dbReference>
<dbReference type="RefSeq" id="XP_015627479.1">
    <property type="nucleotide sequence ID" value="XM_015771993.1"/>
</dbReference>
<dbReference type="RefSeq" id="XP_015627487.1">
    <property type="nucleotide sequence ID" value="XM_015772001.1"/>
</dbReference>
<dbReference type="SMR" id="Q93VD5"/>
<dbReference type="FunCoup" id="Q93VD5">
    <property type="interactions" value="240"/>
</dbReference>
<dbReference type="STRING" id="39947.Q93VD5"/>
<dbReference type="PaxDb" id="39947-Q93VD5"/>
<dbReference type="EnsemblPlants" id="Os01t0566500-01">
    <property type="protein sequence ID" value="Os01t0566500-01"/>
    <property type="gene ID" value="Os01g0566500"/>
</dbReference>
<dbReference type="GeneID" id="4327933"/>
<dbReference type="Gramene" id="Os01t0566500-01">
    <property type="protein sequence ID" value="Os01t0566500-01"/>
    <property type="gene ID" value="Os01g0566500"/>
</dbReference>
<dbReference type="KEGG" id="dosa:Os01g0566500"/>
<dbReference type="KEGG" id="osa:4327933"/>
<dbReference type="eggNOG" id="KOG1285">
    <property type="taxonomic scope" value="Eukaryota"/>
</dbReference>
<dbReference type="HOGENOM" id="CLU_016472_1_2_1"/>
<dbReference type="InParanoid" id="Q93VD5"/>
<dbReference type="OMA" id="VIGRMDC"/>
<dbReference type="OrthoDB" id="407010at2759"/>
<dbReference type="PlantReactome" id="R-OSA-5367729">
    <property type="pathway name" value="Strigolactone biosynthesis"/>
</dbReference>
<dbReference type="Proteomes" id="UP000000763">
    <property type="component" value="Chromosome 1"/>
</dbReference>
<dbReference type="Proteomes" id="UP000007752">
    <property type="component" value="Chromosome 1"/>
</dbReference>
<dbReference type="Proteomes" id="UP000059680">
    <property type="component" value="Chromosome 1"/>
</dbReference>
<dbReference type="GO" id="GO:0009507">
    <property type="term" value="C:chloroplast"/>
    <property type="evidence" value="ECO:0000318"/>
    <property type="project" value="GO_Central"/>
</dbReference>
<dbReference type="GO" id="GO:0010436">
    <property type="term" value="F:carotenoid dioxygenase activity"/>
    <property type="evidence" value="ECO:0000318"/>
    <property type="project" value="GO_Central"/>
</dbReference>
<dbReference type="GO" id="GO:0046872">
    <property type="term" value="F:metal ion binding"/>
    <property type="evidence" value="ECO:0007669"/>
    <property type="project" value="UniProtKB-KW"/>
</dbReference>
<dbReference type="GO" id="GO:0016121">
    <property type="term" value="P:carotene catabolic process"/>
    <property type="evidence" value="ECO:0000318"/>
    <property type="project" value="GO_Central"/>
</dbReference>
<dbReference type="InterPro" id="IPR004294">
    <property type="entry name" value="Carotenoid_Oase"/>
</dbReference>
<dbReference type="PANTHER" id="PTHR10543">
    <property type="entry name" value="BETA-CAROTENE DIOXYGENASE"/>
    <property type="match status" value="1"/>
</dbReference>
<dbReference type="PANTHER" id="PTHR10543:SF94">
    <property type="entry name" value="CAROTENOID CLEAVAGE DIOXYGENASE 8 HOMOLOG A, CHLOROPLASTIC"/>
    <property type="match status" value="1"/>
</dbReference>
<dbReference type="Pfam" id="PF03055">
    <property type="entry name" value="RPE65"/>
    <property type="match status" value="1"/>
</dbReference>
<evidence type="ECO:0000250" key="1"/>
<evidence type="ECO:0000255" key="2"/>
<evidence type="ECO:0000256" key="3">
    <source>
        <dbReference type="SAM" id="MobiDB-lite"/>
    </source>
</evidence>
<evidence type="ECO:0000269" key="4">
    <source>
    </source>
</evidence>
<evidence type="ECO:0000305" key="5"/>
<name>CCD8A_ORYSJ</name>
<accession>Q93VD5</accession>
<accession>A0A0P0V470</accession>
<proteinExistence type="evidence at transcript level"/>
<reference key="1">
    <citation type="journal article" date="2002" name="Nature">
        <title>The genome sequence and structure of rice chromosome 1.</title>
        <authorList>
            <person name="Sasaki T."/>
            <person name="Matsumoto T."/>
            <person name="Yamamoto K."/>
            <person name="Sakata K."/>
            <person name="Baba T."/>
            <person name="Katayose Y."/>
            <person name="Wu J."/>
            <person name="Niimura Y."/>
            <person name="Cheng Z."/>
            <person name="Nagamura Y."/>
            <person name="Antonio B.A."/>
            <person name="Kanamori H."/>
            <person name="Hosokawa S."/>
            <person name="Masukawa M."/>
            <person name="Arikawa K."/>
            <person name="Chiden Y."/>
            <person name="Hayashi M."/>
            <person name="Okamoto M."/>
            <person name="Ando T."/>
            <person name="Aoki H."/>
            <person name="Arita K."/>
            <person name="Hamada M."/>
            <person name="Harada C."/>
            <person name="Hijishita S."/>
            <person name="Honda M."/>
            <person name="Ichikawa Y."/>
            <person name="Idonuma A."/>
            <person name="Iijima M."/>
            <person name="Ikeda M."/>
            <person name="Ikeno M."/>
            <person name="Ito S."/>
            <person name="Ito T."/>
            <person name="Ito Y."/>
            <person name="Ito Y."/>
            <person name="Iwabuchi A."/>
            <person name="Kamiya K."/>
            <person name="Karasawa W."/>
            <person name="Katagiri S."/>
            <person name="Kikuta A."/>
            <person name="Kobayashi N."/>
            <person name="Kono I."/>
            <person name="Machita K."/>
            <person name="Maehara T."/>
            <person name="Mizuno H."/>
            <person name="Mizubayashi T."/>
            <person name="Mukai Y."/>
            <person name="Nagasaki H."/>
            <person name="Nakashima M."/>
            <person name="Nakama Y."/>
            <person name="Nakamichi Y."/>
            <person name="Nakamura M."/>
            <person name="Namiki N."/>
            <person name="Negishi M."/>
            <person name="Ohta I."/>
            <person name="Ono N."/>
            <person name="Saji S."/>
            <person name="Sakai K."/>
            <person name="Shibata M."/>
            <person name="Shimokawa T."/>
            <person name="Shomura A."/>
            <person name="Song J."/>
            <person name="Takazaki Y."/>
            <person name="Terasawa K."/>
            <person name="Tsuji K."/>
            <person name="Waki K."/>
            <person name="Yamagata H."/>
            <person name="Yamane H."/>
            <person name="Yoshiki S."/>
            <person name="Yoshihara R."/>
            <person name="Yukawa K."/>
            <person name="Zhong H."/>
            <person name="Iwama H."/>
            <person name="Endo T."/>
            <person name="Ito H."/>
            <person name="Hahn J.H."/>
            <person name="Kim H.-I."/>
            <person name="Eun M.-Y."/>
            <person name="Yano M."/>
            <person name="Jiang J."/>
            <person name="Gojobori T."/>
        </authorList>
    </citation>
    <scope>NUCLEOTIDE SEQUENCE [LARGE SCALE GENOMIC DNA]</scope>
    <source>
        <strain>cv. Nipponbare</strain>
    </source>
</reference>
<reference key="2">
    <citation type="journal article" date="2005" name="Nature">
        <title>The map-based sequence of the rice genome.</title>
        <authorList>
            <consortium name="International rice genome sequencing project (IRGSP)"/>
        </authorList>
    </citation>
    <scope>NUCLEOTIDE SEQUENCE [LARGE SCALE GENOMIC DNA]</scope>
    <source>
        <strain>cv. Nipponbare</strain>
    </source>
</reference>
<reference key="3">
    <citation type="journal article" date="2008" name="Nucleic Acids Res.">
        <title>The rice annotation project database (RAP-DB): 2008 update.</title>
        <authorList>
            <consortium name="The rice annotation project (RAP)"/>
        </authorList>
    </citation>
    <scope>GENOME REANNOTATION</scope>
    <source>
        <strain>cv. Nipponbare</strain>
    </source>
</reference>
<reference key="4">
    <citation type="journal article" date="2013" name="Rice">
        <title>Improvement of the Oryza sativa Nipponbare reference genome using next generation sequence and optical map data.</title>
        <authorList>
            <person name="Kawahara Y."/>
            <person name="de la Bastide M."/>
            <person name="Hamilton J.P."/>
            <person name="Kanamori H."/>
            <person name="McCombie W.R."/>
            <person name="Ouyang S."/>
            <person name="Schwartz D.C."/>
            <person name="Tanaka T."/>
            <person name="Wu J."/>
            <person name="Zhou S."/>
            <person name="Childs K.L."/>
            <person name="Davidson R.M."/>
            <person name="Lin H."/>
            <person name="Quesada-Ocampo L."/>
            <person name="Vaillancourt B."/>
            <person name="Sakai H."/>
            <person name="Lee S.S."/>
            <person name="Kim J."/>
            <person name="Numa H."/>
            <person name="Itoh T."/>
            <person name="Buell C.R."/>
            <person name="Matsumoto T."/>
        </authorList>
    </citation>
    <scope>GENOME REANNOTATION</scope>
    <source>
        <strain>cv. Nipponbare</strain>
    </source>
</reference>
<reference key="5">
    <citation type="journal article" date="2005" name="PLoS Biol.">
        <title>The genomes of Oryza sativa: a history of duplications.</title>
        <authorList>
            <person name="Yu J."/>
            <person name="Wang J."/>
            <person name="Lin W."/>
            <person name="Li S."/>
            <person name="Li H."/>
            <person name="Zhou J."/>
            <person name="Ni P."/>
            <person name="Dong W."/>
            <person name="Hu S."/>
            <person name="Zeng C."/>
            <person name="Zhang J."/>
            <person name="Zhang Y."/>
            <person name="Li R."/>
            <person name="Xu Z."/>
            <person name="Li S."/>
            <person name="Li X."/>
            <person name="Zheng H."/>
            <person name="Cong L."/>
            <person name="Lin L."/>
            <person name="Yin J."/>
            <person name="Geng J."/>
            <person name="Li G."/>
            <person name="Shi J."/>
            <person name="Liu J."/>
            <person name="Lv H."/>
            <person name="Li J."/>
            <person name="Wang J."/>
            <person name="Deng Y."/>
            <person name="Ran L."/>
            <person name="Shi X."/>
            <person name="Wang X."/>
            <person name="Wu Q."/>
            <person name="Li C."/>
            <person name="Ren X."/>
            <person name="Wang J."/>
            <person name="Wang X."/>
            <person name="Li D."/>
            <person name="Liu D."/>
            <person name="Zhang X."/>
            <person name="Ji Z."/>
            <person name="Zhao W."/>
            <person name="Sun Y."/>
            <person name="Zhang Z."/>
            <person name="Bao J."/>
            <person name="Han Y."/>
            <person name="Dong L."/>
            <person name="Ji J."/>
            <person name="Chen P."/>
            <person name="Wu S."/>
            <person name="Liu J."/>
            <person name="Xiao Y."/>
            <person name="Bu D."/>
            <person name="Tan J."/>
            <person name="Yang L."/>
            <person name="Ye C."/>
            <person name="Zhang J."/>
            <person name="Xu J."/>
            <person name="Zhou Y."/>
            <person name="Yu Y."/>
            <person name="Zhang B."/>
            <person name="Zhuang S."/>
            <person name="Wei H."/>
            <person name="Liu B."/>
            <person name="Lei M."/>
            <person name="Yu H."/>
            <person name="Li Y."/>
            <person name="Xu H."/>
            <person name="Wei S."/>
            <person name="He X."/>
            <person name="Fang L."/>
            <person name="Zhang Z."/>
            <person name="Zhang Y."/>
            <person name="Huang X."/>
            <person name="Su Z."/>
            <person name="Tong W."/>
            <person name="Li J."/>
            <person name="Tong Z."/>
            <person name="Li S."/>
            <person name="Ye J."/>
            <person name="Wang L."/>
            <person name="Fang L."/>
            <person name="Lei T."/>
            <person name="Chen C.-S."/>
            <person name="Chen H.-C."/>
            <person name="Xu Z."/>
            <person name="Li H."/>
            <person name="Huang H."/>
            <person name="Zhang F."/>
            <person name="Xu H."/>
            <person name="Li N."/>
            <person name="Zhao C."/>
            <person name="Li S."/>
            <person name="Dong L."/>
            <person name="Huang Y."/>
            <person name="Li L."/>
            <person name="Xi Y."/>
            <person name="Qi Q."/>
            <person name="Li W."/>
            <person name="Zhang B."/>
            <person name="Hu W."/>
            <person name="Zhang Y."/>
            <person name="Tian X."/>
            <person name="Jiao Y."/>
            <person name="Liang X."/>
            <person name="Jin J."/>
            <person name="Gao L."/>
            <person name="Zheng W."/>
            <person name="Hao B."/>
            <person name="Liu S.-M."/>
            <person name="Wang W."/>
            <person name="Yuan L."/>
            <person name="Cao M."/>
            <person name="McDermott J."/>
            <person name="Samudrala R."/>
            <person name="Wang J."/>
            <person name="Wong G.K.-S."/>
            <person name="Yang H."/>
        </authorList>
    </citation>
    <scope>NUCLEOTIDE SEQUENCE [LARGE SCALE GENOMIC DNA]</scope>
    <source>
        <strain>cv. Nipponbare</strain>
    </source>
</reference>
<reference key="6">
    <citation type="journal article" date="2003" name="Science">
        <title>Collection, mapping, and annotation of over 28,000 cDNA clones from japonica rice.</title>
        <authorList>
            <consortium name="The rice full-length cDNA consortium"/>
        </authorList>
    </citation>
    <scope>NUCLEOTIDE SEQUENCE [LARGE SCALE MRNA]</scope>
    <source>
        <strain>cv. Nipponbare</strain>
    </source>
</reference>
<reference key="7">
    <citation type="journal article" date="2007" name="Plant J.">
        <title>DWARF10, an RMS1/MAX4/DAD1 ortholog, controls lateral bud outgrowth in rice.</title>
        <authorList>
            <person name="Arite T."/>
            <person name="Iwata H."/>
            <person name="Ohshima K."/>
            <person name="Maekawa M."/>
            <person name="Nakajima M."/>
            <person name="Kojima M."/>
            <person name="Sakakibara H."/>
            <person name="Kyozuka J."/>
        </authorList>
    </citation>
    <scope>TISSUE SPECIFICITY</scope>
</reference>
<organism>
    <name type="scientific">Oryza sativa subsp. japonica</name>
    <name type="common">Rice</name>
    <dbReference type="NCBI Taxonomy" id="39947"/>
    <lineage>
        <taxon>Eukaryota</taxon>
        <taxon>Viridiplantae</taxon>
        <taxon>Streptophyta</taxon>
        <taxon>Embryophyta</taxon>
        <taxon>Tracheophyta</taxon>
        <taxon>Spermatophyta</taxon>
        <taxon>Magnoliopsida</taxon>
        <taxon>Liliopsida</taxon>
        <taxon>Poales</taxon>
        <taxon>Poaceae</taxon>
        <taxon>BOP clade</taxon>
        <taxon>Oryzoideae</taxon>
        <taxon>Oryzeae</taxon>
        <taxon>Oryzinae</taxon>
        <taxon>Oryza</taxon>
        <taxon>Oryza sativa</taxon>
    </lineage>
</organism>
<feature type="transit peptide" description="Chloroplast" evidence="2">
    <location>
        <begin position="1"/>
        <end position="43"/>
    </location>
</feature>
<feature type="chain" id="PRO_0000422059" description="Carotenoid cleavage dioxygenase 8 homolog A, chloroplastic">
    <location>
        <begin position="44"/>
        <end position="552"/>
    </location>
</feature>
<feature type="region of interest" description="Disordered" evidence="3">
    <location>
        <begin position="32"/>
        <end position="73"/>
    </location>
</feature>
<feature type="compositionally biased region" description="Polar residues" evidence="3">
    <location>
        <begin position="59"/>
        <end position="72"/>
    </location>
</feature>
<feature type="binding site" evidence="1">
    <location>
        <position position="239"/>
    </location>
    <ligand>
        <name>Fe cation</name>
        <dbReference type="ChEBI" id="CHEBI:24875"/>
        <note>catalytic</note>
    </ligand>
</feature>
<feature type="binding site" evidence="1">
    <location>
        <position position="289"/>
    </location>
    <ligand>
        <name>Fe cation</name>
        <dbReference type="ChEBI" id="CHEBI:24875"/>
        <note>catalytic</note>
    </ligand>
</feature>
<feature type="binding site" evidence="1">
    <location>
        <position position="356"/>
    </location>
    <ligand>
        <name>Fe cation</name>
        <dbReference type="ChEBI" id="CHEBI:24875"/>
        <note>catalytic</note>
    </ligand>
</feature>
<feature type="binding site" evidence="1">
    <location>
        <position position="543"/>
    </location>
    <ligand>
        <name>Fe cation</name>
        <dbReference type="ChEBI" id="CHEBI:24875"/>
        <note>catalytic</note>
    </ligand>
</feature>
<sequence>MATSLTLIATPCTAPRSSSSFALAPRLPPRCSNATAARRRAVRATTLQSDQEPAGSGDSGATTTKLSASTSVRQERWEGDLPIEGCLPPWLNGTYIRNGPGMWDVGEHAFHHLFDGYATLVRVSFRGGGGARATGAHRQIESEAYRAAVARGRPVLREFSHCPAPAKSLLHRFGDLVGLVTGAALTDNPNSAVLPLGDGRVMCLTETTKSSVLIDPDTLETVGRFRYTDRLGGMVQSAHPIVTDTEFLTLLPDLVRPGHLVVRMEAGSNERKVIGRMDCRGGPSPGWLHSFAVTEKYAVVPEMPLRYSSASLLASELAPFYAFDWVPASGSYMHVMCKSTGKTVASVEVPPFMAIHFINAYEEEGDEAAVVVDCCEHYGDPAIIETLVLSRLRLLRGKDVLPNARVGRFRIPLDGSPFGELETALDPEEHGRGMDMCSINPARLGRKYQYAYACGARRPCNFPNTLTKIDLVEKKAKSWHEEGSVPSEPFFVARPGATDEDDGVVISIVSSDDGEGYALVLDATTFEEIARVRFPYGLPYGFHGCWIPATEE</sequence>
<comment type="function">
    <text evidence="1">May be involved in strigolactones biosynthesis.</text>
</comment>
<comment type="cofactor">
    <cofactor evidence="1">
        <name>Fe(2+)</name>
        <dbReference type="ChEBI" id="CHEBI:29033"/>
    </cofactor>
    <text evidence="1">Binds 1 Fe(2+) ion per subunit.</text>
</comment>
<comment type="subcellular location">
    <subcellularLocation>
        <location evidence="1">Plastid</location>
        <location evidence="1">Chloroplast</location>
    </subcellularLocation>
</comment>
<comment type="tissue specificity">
    <text evidence="4">Highly expressed in panicles, inflorescences and parenchyma cells of the root stele, and at lower levels in shoot apex, leaf buds and xylem parenchyma cells of the stem.</text>
</comment>
<comment type="similarity">
    <text evidence="5">Belongs to the carotenoid oxygenase family.</text>
</comment>
<protein>
    <recommendedName>
        <fullName>Carotenoid cleavage dioxygenase 8 homolog A, chloroplastic</fullName>
        <shortName>OsCCD8a</shortName>
        <ecNumber>1.13.11.-</ecNumber>
    </recommendedName>
    <alternativeName>
        <fullName>Protein D10-like</fullName>
    </alternativeName>
</protein>